<keyword id="KW-0521">NADP</keyword>
<keyword id="KW-0560">Oxidoreductase</keyword>
<keyword id="KW-0614">Plasmid</keyword>
<keyword id="KW-1185">Reference proteome</keyword>
<feature type="chain" id="PRO_0000182753" description="Probable glutamate dehydrogenase">
    <location>
        <begin position="1"/>
        <end position="443"/>
    </location>
</feature>
<feature type="active site" evidence="1">
    <location>
        <position position="86"/>
    </location>
</feature>
<comment type="catalytic activity">
    <reaction>
        <text>L-glutamate + NAD(+) + H2O = 2-oxoglutarate + NH4(+) + NADH + H(+)</text>
        <dbReference type="Rhea" id="RHEA:15133"/>
        <dbReference type="ChEBI" id="CHEBI:15377"/>
        <dbReference type="ChEBI" id="CHEBI:15378"/>
        <dbReference type="ChEBI" id="CHEBI:16810"/>
        <dbReference type="ChEBI" id="CHEBI:28938"/>
        <dbReference type="ChEBI" id="CHEBI:29985"/>
        <dbReference type="ChEBI" id="CHEBI:57540"/>
        <dbReference type="ChEBI" id="CHEBI:57945"/>
        <dbReference type="EC" id="1.4.1.3"/>
    </reaction>
</comment>
<comment type="catalytic activity">
    <reaction>
        <text>L-glutamate + NADP(+) + H2O = 2-oxoglutarate + NH4(+) + NADPH + H(+)</text>
        <dbReference type="Rhea" id="RHEA:11612"/>
        <dbReference type="ChEBI" id="CHEBI:15377"/>
        <dbReference type="ChEBI" id="CHEBI:15378"/>
        <dbReference type="ChEBI" id="CHEBI:16810"/>
        <dbReference type="ChEBI" id="CHEBI:28938"/>
        <dbReference type="ChEBI" id="CHEBI:29985"/>
        <dbReference type="ChEBI" id="CHEBI:57783"/>
        <dbReference type="ChEBI" id="CHEBI:58349"/>
        <dbReference type="EC" id="1.4.1.3"/>
    </reaction>
</comment>
<comment type="similarity">
    <text evidence="2">Belongs to the Glu/Leu/Phe/Val dehydrogenases family.</text>
</comment>
<proteinExistence type="inferred from homology"/>
<gene>
    <name type="ordered locus">NGR_a01340</name>
    <name type="ORF">y4uF</name>
</gene>
<protein>
    <recommendedName>
        <fullName>Probable glutamate dehydrogenase</fullName>
        <shortName>GDH</shortName>
        <ecNumber>1.4.1.3</ecNumber>
    </recommendedName>
</protein>
<sequence length="443" mass="48845">MSFLDLPEGLPERIIQCNSPYTVRFGVRLRGRMYSFIGWRSVREHCEPVKGDIRYASNADAEEVEALAALMTLKCSLVDVPFGGSKGALKIDPRGWTPQELEHITRRFTQEMNKRPDRARRQCVGSDIGTGEREMAWMMDEFRRANPTDVVTSGACVTGKPLSKGGIAGRAESTGRGVQFAIQSSLRDTRTPGLDGRRNLKGASTVIQGFGNVGYHAARFLSEEDDARVTVLAERDGYVANPEGLSIEALKQHQIRTGSILGFDGAKSIAGDMCGVEQPCDVLIPAAMENAIHAENAERMKAHLVVEAANGPVTFEADEILRSRGVTILPDLYVNAGGVVVSYFERVKNLTHIPFGLMERRRRERGNHTIATALERMTGKESPADMRDEFLEGGAEIDLVRSGLEDVMRSTWTRIADLMEQQPELGDYRTAAYVASIRQVADL</sequence>
<geneLocation type="plasmid">
    <name>sym pNGR234a</name>
</geneLocation>
<organism>
    <name type="scientific">Sinorhizobium fredii (strain NBRC 101917 / NGR234)</name>
    <dbReference type="NCBI Taxonomy" id="394"/>
    <lineage>
        <taxon>Bacteria</taxon>
        <taxon>Pseudomonadati</taxon>
        <taxon>Pseudomonadota</taxon>
        <taxon>Alphaproteobacteria</taxon>
        <taxon>Hyphomicrobiales</taxon>
        <taxon>Rhizobiaceae</taxon>
        <taxon>Sinorhizobium/Ensifer group</taxon>
        <taxon>Sinorhizobium</taxon>
    </lineage>
</organism>
<name>DHE3_SINFN</name>
<evidence type="ECO:0000250" key="1"/>
<evidence type="ECO:0000305" key="2"/>
<reference key="1">
    <citation type="journal article" date="1996" name="Genome Res.">
        <title>Sequencing the 500-kb GC-rich symbiotic replicon of Rhizobium sp. NGR234 using dye terminators and a thermostable 'sequenase': a beginning.</title>
        <authorList>
            <person name="Freiberg C."/>
            <person name="Perret X."/>
            <person name="Broughton W.J."/>
            <person name="Rosenthal A."/>
        </authorList>
    </citation>
    <scope>NUCLEOTIDE SEQUENCE [GENOMIC DNA]</scope>
</reference>
<reference key="2">
    <citation type="journal article" date="1997" name="Nature">
        <title>Molecular basis of symbiosis between Rhizobium and legumes.</title>
        <authorList>
            <person name="Freiberg C.A."/>
            <person name="Fellay R."/>
            <person name="Bairoch A."/>
            <person name="Broughton W.J."/>
            <person name="Rosenthal A."/>
            <person name="Perret X."/>
        </authorList>
    </citation>
    <scope>NUCLEOTIDE SEQUENCE [LARGE SCALE GENOMIC DNA]</scope>
    <source>
        <strain>NBRC 101917 / NGR234</strain>
    </source>
</reference>
<reference key="3">
    <citation type="journal article" date="2009" name="Appl. Environ. Microbiol.">
        <title>Rhizobium sp. strain NGR234 possesses a remarkable number of secretion systems.</title>
        <authorList>
            <person name="Schmeisser C."/>
            <person name="Liesegang H."/>
            <person name="Krysciak D."/>
            <person name="Bakkou N."/>
            <person name="Le Quere A."/>
            <person name="Wollherr A."/>
            <person name="Heinemeyer I."/>
            <person name="Morgenstern B."/>
            <person name="Pommerening-Roeser A."/>
            <person name="Flores M."/>
            <person name="Palacios R."/>
            <person name="Brenner S."/>
            <person name="Gottschalk G."/>
            <person name="Schmitz R.A."/>
            <person name="Broughton W.J."/>
            <person name="Perret X."/>
            <person name="Strittmatter A.W."/>
            <person name="Streit W.R."/>
        </authorList>
    </citation>
    <scope>NUCLEOTIDE SEQUENCE [LARGE SCALE GENOMIC DNA]</scope>
    <source>
        <strain>NBRC 101917 / NGR234</strain>
    </source>
</reference>
<accession>Q53199</accession>
<dbReference type="EC" id="1.4.1.3"/>
<dbReference type="EMBL" id="Z68203">
    <property type="protein sequence ID" value="CAA92406.1"/>
    <property type="molecule type" value="Genomic_DNA"/>
</dbReference>
<dbReference type="EMBL" id="U00090">
    <property type="protein sequence ID" value="AAB91878.1"/>
    <property type="molecule type" value="Genomic_DNA"/>
</dbReference>
<dbReference type="RefSeq" id="NP_444091.1">
    <property type="nucleotide sequence ID" value="NC_000914.2"/>
</dbReference>
<dbReference type="RefSeq" id="WP_010875172.1">
    <property type="nucleotide sequence ID" value="NC_000914.2"/>
</dbReference>
<dbReference type="SMR" id="Q53199"/>
<dbReference type="KEGG" id="rhi:NGR_a01340"/>
<dbReference type="PATRIC" id="fig|394.7.peg.117"/>
<dbReference type="eggNOG" id="COG0334">
    <property type="taxonomic scope" value="Bacteria"/>
</dbReference>
<dbReference type="HOGENOM" id="CLU_025763_1_0_5"/>
<dbReference type="OrthoDB" id="9803297at2"/>
<dbReference type="Proteomes" id="UP000001054">
    <property type="component" value="Plasmid pNGR234a"/>
</dbReference>
<dbReference type="GO" id="GO:0004352">
    <property type="term" value="F:glutamate dehydrogenase (NAD+) activity"/>
    <property type="evidence" value="ECO:0007669"/>
    <property type="project" value="RHEA"/>
</dbReference>
<dbReference type="GO" id="GO:0004354">
    <property type="term" value="F:glutamate dehydrogenase (NADP+) activity"/>
    <property type="evidence" value="ECO:0007669"/>
    <property type="project" value="RHEA"/>
</dbReference>
<dbReference type="GO" id="GO:0006538">
    <property type="term" value="P:glutamate catabolic process"/>
    <property type="evidence" value="ECO:0007669"/>
    <property type="project" value="TreeGrafter"/>
</dbReference>
<dbReference type="CDD" id="cd01076">
    <property type="entry name" value="NAD_bind_1_Glu_DH"/>
    <property type="match status" value="1"/>
</dbReference>
<dbReference type="Gene3D" id="3.40.50.10860">
    <property type="entry name" value="Leucine Dehydrogenase, chain A, domain 1"/>
    <property type="match status" value="1"/>
</dbReference>
<dbReference type="Gene3D" id="3.40.50.720">
    <property type="entry name" value="NAD(P)-binding Rossmann-like Domain"/>
    <property type="match status" value="1"/>
</dbReference>
<dbReference type="InterPro" id="IPR046346">
    <property type="entry name" value="Aminoacid_DH-like_N_sf"/>
</dbReference>
<dbReference type="InterPro" id="IPR006095">
    <property type="entry name" value="Glu/Leu/Phe/Val/Trp_DH"/>
</dbReference>
<dbReference type="InterPro" id="IPR006096">
    <property type="entry name" value="Glu/Leu/Phe/Val/Trp_DH_C"/>
</dbReference>
<dbReference type="InterPro" id="IPR006097">
    <property type="entry name" value="Glu/Leu/Phe/Val/Trp_DH_dimer"/>
</dbReference>
<dbReference type="InterPro" id="IPR014362">
    <property type="entry name" value="Glu_DH"/>
</dbReference>
<dbReference type="InterPro" id="IPR036291">
    <property type="entry name" value="NAD(P)-bd_dom_sf"/>
</dbReference>
<dbReference type="InterPro" id="IPR033922">
    <property type="entry name" value="NAD_bind_Glu_DH"/>
</dbReference>
<dbReference type="PANTHER" id="PTHR11606">
    <property type="entry name" value="GLUTAMATE DEHYDROGENASE"/>
    <property type="match status" value="1"/>
</dbReference>
<dbReference type="PANTHER" id="PTHR11606:SF13">
    <property type="entry name" value="GLUTAMATE DEHYDROGENASE 1, MITOCHONDRIAL"/>
    <property type="match status" value="1"/>
</dbReference>
<dbReference type="Pfam" id="PF00208">
    <property type="entry name" value="ELFV_dehydrog"/>
    <property type="match status" value="1"/>
</dbReference>
<dbReference type="Pfam" id="PF02812">
    <property type="entry name" value="ELFV_dehydrog_N"/>
    <property type="match status" value="1"/>
</dbReference>
<dbReference type="PIRSF" id="PIRSF000185">
    <property type="entry name" value="Glu_DH"/>
    <property type="match status" value="1"/>
</dbReference>
<dbReference type="PRINTS" id="PR00082">
    <property type="entry name" value="GLFDHDRGNASE"/>
</dbReference>
<dbReference type="SMART" id="SM00839">
    <property type="entry name" value="ELFV_dehydrog"/>
    <property type="match status" value="1"/>
</dbReference>
<dbReference type="SUPFAM" id="SSF53223">
    <property type="entry name" value="Aminoacid dehydrogenase-like, N-terminal domain"/>
    <property type="match status" value="1"/>
</dbReference>
<dbReference type="SUPFAM" id="SSF51735">
    <property type="entry name" value="NAD(P)-binding Rossmann-fold domains"/>
    <property type="match status" value="1"/>
</dbReference>